<accession>Q9CZH3</accession>
<sequence length="122" mass="13331">MEDKPLVVSKQKTEVVCGVPTQVVCTAFSSHILVVVTQFGKMGTLVSLEPSNVANDISKPVLTTRVLLGQDEPLIHVFAKNLVAFVSQEAGNRAVLLAMAVKDKSMERLKALKEVIRLCQVW</sequence>
<reference key="1">
    <citation type="journal article" date="2005" name="Science">
        <title>The transcriptional landscape of the mammalian genome.</title>
        <authorList>
            <person name="Carninci P."/>
            <person name="Kasukawa T."/>
            <person name="Katayama S."/>
            <person name="Gough J."/>
            <person name="Frith M.C."/>
            <person name="Maeda N."/>
            <person name="Oyama R."/>
            <person name="Ravasi T."/>
            <person name="Lenhard B."/>
            <person name="Wells C."/>
            <person name="Kodzius R."/>
            <person name="Shimokawa K."/>
            <person name="Bajic V.B."/>
            <person name="Brenner S.E."/>
            <person name="Batalov S."/>
            <person name="Forrest A.R."/>
            <person name="Zavolan M."/>
            <person name="Davis M.J."/>
            <person name="Wilming L.G."/>
            <person name="Aidinis V."/>
            <person name="Allen J.E."/>
            <person name="Ambesi-Impiombato A."/>
            <person name="Apweiler R."/>
            <person name="Aturaliya R.N."/>
            <person name="Bailey T.L."/>
            <person name="Bansal M."/>
            <person name="Baxter L."/>
            <person name="Beisel K.W."/>
            <person name="Bersano T."/>
            <person name="Bono H."/>
            <person name="Chalk A.M."/>
            <person name="Chiu K.P."/>
            <person name="Choudhary V."/>
            <person name="Christoffels A."/>
            <person name="Clutterbuck D.R."/>
            <person name="Crowe M.L."/>
            <person name="Dalla E."/>
            <person name="Dalrymple B.P."/>
            <person name="de Bono B."/>
            <person name="Della Gatta G."/>
            <person name="di Bernardo D."/>
            <person name="Down T."/>
            <person name="Engstrom P."/>
            <person name="Fagiolini M."/>
            <person name="Faulkner G."/>
            <person name="Fletcher C.F."/>
            <person name="Fukushima T."/>
            <person name="Furuno M."/>
            <person name="Futaki S."/>
            <person name="Gariboldi M."/>
            <person name="Georgii-Hemming P."/>
            <person name="Gingeras T.R."/>
            <person name="Gojobori T."/>
            <person name="Green R.E."/>
            <person name="Gustincich S."/>
            <person name="Harbers M."/>
            <person name="Hayashi Y."/>
            <person name="Hensch T.K."/>
            <person name="Hirokawa N."/>
            <person name="Hill D."/>
            <person name="Huminiecki L."/>
            <person name="Iacono M."/>
            <person name="Ikeo K."/>
            <person name="Iwama A."/>
            <person name="Ishikawa T."/>
            <person name="Jakt M."/>
            <person name="Kanapin A."/>
            <person name="Katoh M."/>
            <person name="Kawasawa Y."/>
            <person name="Kelso J."/>
            <person name="Kitamura H."/>
            <person name="Kitano H."/>
            <person name="Kollias G."/>
            <person name="Krishnan S.P."/>
            <person name="Kruger A."/>
            <person name="Kummerfeld S.K."/>
            <person name="Kurochkin I.V."/>
            <person name="Lareau L.F."/>
            <person name="Lazarevic D."/>
            <person name="Lipovich L."/>
            <person name="Liu J."/>
            <person name="Liuni S."/>
            <person name="McWilliam S."/>
            <person name="Madan Babu M."/>
            <person name="Madera M."/>
            <person name="Marchionni L."/>
            <person name="Matsuda H."/>
            <person name="Matsuzawa S."/>
            <person name="Miki H."/>
            <person name="Mignone F."/>
            <person name="Miyake S."/>
            <person name="Morris K."/>
            <person name="Mottagui-Tabar S."/>
            <person name="Mulder N."/>
            <person name="Nakano N."/>
            <person name="Nakauchi H."/>
            <person name="Ng P."/>
            <person name="Nilsson R."/>
            <person name="Nishiguchi S."/>
            <person name="Nishikawa S."/>
            <person name="Nori F."/>
            <person name="Ohara O."/>
            <person name="Okazaki Y."/>
            <person name="Orlando V."/>
            <person name="Pang K.C."/>
            <person name="Pavan W.J."/>
            <person name="Pavesi G."/>
            <person name="Pesole G."/>
            <person name="Petrovsky N."/>
            <person name="Piazza S."/>
            <person name="Reed J."/>
            <person name="Reid J.F."/>
            <person name="Ring B.Z."/>
            <person name="Ringwald M."/>
            <person name="Rost B."/>
            <person name="Ruan Y."/>
            <person name="Salzberg S.L."/>
            <person name="Sandelin A."/>
            <person name="Schneider C."/>
            <person name="Schoenbach C."/>
            <person name="Sekiguchi K."/>
            <person name="Semple C.A."/>
            <person name="Seno S."/>
            <person name="Sessa L."/>
            <person name="Sheng Y."/>
            <person name="Shibata Y."/>
            <person name="Shimada H."/>
            <person name="Shimada K."/>
            <person name="Silva D."/>
            <person name="Sinclair B."/>
            <person name="Sperling S."/>
            <person name="Stupka E."/>
            <person name="Sugiura K."/>
            <person name="Sultana R."/>
            <person name="Takenaka Y."/>
            <person name="Taki K."/>
            <person name="Tammoja K."/>
            <person name="Tan S.L."/>
            <person name="Tang S."/>
            <person name="Taylor M.S."/>
            <person name="Tegner J."/>
            <person name="Teichmann S.A."/>
            <person name="Ueda H.R."/>
            <person name="van Nimwegen E."/>
            <person name="Verardo R."/>
            <person name="Wei C.L."/>
            <person name="Yagi K."/>
            <person name="Yamanishi H."/>
            <person name="Zabarovsky E."/>
            <person name="Zhu S."/>
            <person name="Zimmer A."/>
            <person name="Hide W."/>
            <person name="Bult C."/>
            <person name="Grimmond S.M."/>
            <person name="Teasdale R.D."/>
            <person name="Liu E.T."/>
            <person name="Brusic V."/>
            <person name="Quackenbush J."/>
            <person name="Wahlestedt C."/>
            <person name="Mattick J.S."/>
            <person name="Hume D.A."/>
            <person name="Kai C."/>
            <person name="Sasaki D."/>
            <person name="Tomaru Y."/>
            <person name="Fukuda S."/>
            <person name="Kanamori-Katayama M."/>
            <person name="Suzuki M."/>
            <person name="Aoki J."/>
            <person name="Arakawa T."/>
            <person name="Iida J."/>
            <person name="Imamura K."/>
            <person name="Itoh M."/>
            <person name="Kato T."/>
            <person name="Kawaji H."/>
            <person name="Kawagashira N."/>
            <person name="Kawashima T."/>
            <person name="Kojima M."/>
            <person name="Kondo S."/>
            <person name="Konno H."/>
            <person name="Nakano K."/>
            <person name="Ninomiya N."/>
            <person name="Nishio T."/>
            <person name="Okada M."/>
            <person name="Plessy C."/>
            <person name="Shibata K."/>
            <person name="Shiraki T."/>
            <person name="Suzuki S."/>
            <person name="Tagami M."/>
            <person name="Waki K."/>
            <person name="Watahiki A."/>
            <person name="Okamura-Oho Y."/>
            <person name="Suzuki H."/>
            <person name="Kawai J."/>
            <person name="Hayashizaki Y."/>
        </authorList>
    </citation>
    <scope>NUCLEOTIDE SEQUENCE [LARGE SCALE MRNA]</scope>
    <source>
        <strain>C57BL/6J</strain>
        <tissue>Embryo</tissue>
    </source>
</reference>
<reference key="2">
    <citation type="journal article" date="2004" name="Genome Res.">
        <title>The status, quality, and expansion of the NIH full-length cDNA project: the Mammalian Gene Collection (MGC).</title>
        <authorList>
            <consortium name="The MGC Project Team"/>
        </authorList>
    </citation>
    <scope>NUCLEOTIDE SEQUENCE [LARGE SCALE MRNA]</scope>
    <source>
        <strain>C57BL/6J</strain>
        <strain>FVB/N</strain>
        <tissue>Brain</tissue>
        <tissue>Kidney</tissue>
    </source>
</reference>
<reference key="3">
    <citation type="journal article" date="2007" name="Mol. Cell">
        <title>20S proteasome assembly is orchestrated by two distinct pairs of chaperones in yeast and in mammals.</title>
        <authorList>
            <person name="Le Tallec B."/>
            <person name="Barrault M.-B."/>
            <person name="Courbeyrette R."/>
            <person name="Guerois R."/>
            <person name="Marsolier-Kergoat M.-C."/>
            <person name="Peyroche A."/>
        </authorList>
    </citation>
    <scope>FUNCTION</scope>
    <scope>INTERACTION WITH PSMG4 AND PROTEASOME</scope>
</reference>
<reference key="4">
    <citation type="journal article" date="2010" name="Cell">
        <title>A tissue-specific atlas of mouse protein phosphorylation and expression.</title>
        <authorList>
            <person name="Huttlin E.L."/>
            <person name="Jedrychowski M.P."/>
            <person name="Elias J.E."/>
            <person name="Goswami T."/>
            <person name="Rad R."/>
            <person name="Beausoleil S.A."/>
            <person name="Villen J."/>
            <person name="Haas W."/>
            <person name="Sowa M.E."/>
            <person name="Gygi S.P."/>
        </authorList>
    </citation>
    <scope>IDENTIFICATION BY MASS SPECTROMETRY [LARGE SCALE ANALYSIS]</scope>
    <source>
        <tissue>Liver</tissue>
        <tissue>Testis</tissue>
    </source>
</reference>
<name>PSMG3_MOUSE</name>
<comment type="function">
    <text evidence="3">Chaperone protein which promotes assembly of the 20S proteasome. May cooperate with PSMG1-PSMG2 heterodimers to orchestrate the correct assembly of proteasomes.</text>
</comment>
<comment type="subunit">
    <text evidence="1 3">Homodimer. Interacts directly with alpha and beta subunits of the 20S proteasome but dissociates before the formation of half-proteasomes, probably upon recruitment of POMP (By similarity). Interacts with PSMG4.</text>
</comment>
<comment type="similarity">
    <text evidence="4">Belongs to the PSMG3 family.</text>
</comment>
<proteinExistence type="evidence at protein level"/>
<dbReference type="EMBL" id="AK012616">
    <property type="protein sequence ID" value="BAB28357.1"/>
    <property type="molecule type" value="mRNA"/>
</dbReference>
<dbReference type="EMBL" id="BC027410">
    <property type="protein sequence ID" value="AAH27410.1"/>
    <property type="molecule type" value="mRNA"/>
</dbReference>
<dbReference type="EMBL" id="BC058692">
    <property type="protein sequence ID" value="AAH58692.1"/>
    <property type="molecule type" value="mRNA"/>
</dbReference>
<dbReference type="CCDS" id="CCDS19815.1"/>
<dbReference type="RefSeq" id="NP_001343892.1">
    <property type="nucleotide sequence ID" value="NM_001356963.1"/>
</dbReference>
<dbReference type="RefSeq" id="NP_079880.1">
    <property type="nucleotide sequence ID" value="NM_025604.4"/>
</dbReference>
<dbReference type="RefSeq" id="XP_006504789.1">
    <property type="nucleotide sequence ID" value="XM_006504726.3"/>
</dbReference>
<dbReference type="SMR" id="Q9CZH3"/>
<dbReference type="BioGRID" id="211524">
    <property type="interactions" value="1"/>
</dbReference>
<dbReference type="FunCoup" id="Q9CZH3">
    <property type="interactions" value="135"/>
</dbReference>
<dbReference type="IntAct" id="Q9CZH3">
    <property type="interactions" value="2"/>
</dbReference>
<dbReference type="MINT" id="Q9CZH3"/>
<dbReference type="STRING" id="10090.ENSMUSP00000031531"/>
<dbReference type="PhosphoSitePlus" id="Q9CZH3"/>
<dbReference type="SwissPalm" id="Q9CZH3"/>
<dbReference type="PaxDb" id="10090-ENSMUSP00000031531"/>
<dbReference type="PeptideAtlas" id="Q9CZH3"/>
<dbReference type="ProteomicsDB" id="301866"/>
<dbReference type="Pumba" id="Q9CZH3"/>
<dbReference type="Antibodypedia" id="10998">
    <property type="antibodies" value="60 antibodies from 17 providers"/>
</dbReference>
<dbReference type="DNASU" id="66506"/>
<dbReference type="Ensembl" id="ENSMUST00000031531.14">
    <property type="protein sequence ID" value="ENSMUSP00000031531.7"/>
    <property type="gene ID" value="ENSMUSG00000029551.14"/>
</dbReference>
<dbReference type="Ensembl" id="ENSMUST00000182602.2">
    <property type="protein sequence ID" value="ENSMUSP00000138161.2"/>
    <property type="gene ID" value="ENSMUSG00000029551.14"/>
</dbReference>
<dbReference type="GeneID" id="66506"/>
<dbReference type="KEGG" id="mmu:66506"/>
<dbReference type="UCSC" id="uc009ahg.1">
    <property type="organism name" value="mouse"/>
</dbReference>
<dbReference type="AGR" id="MGI:1913756"/>
<dbReference type="CTD" id="84262"/>
<dbReference type="MGI" id="MGI:1913756">
    <property type="gene designation" value="Psmg3"/>
</dbReference>
<dbReference type="VEuPathDB" id="HostDB:ENSMUSG00000029551"/>
<dbReference type="eggNOG" id="KOG4828">
    <property type="taxonomic scope" value="Eukaryota"/>
</dbReference>
<dbReference type="GeneTree" id="ENSGT00390000000324"/>
<dbReference type="HOGENOM" id="CLU_133503_1_0_1"/>
<dbReference type="InParanoid" id="Q9CZH3"/>
<dbReference type="OMA" id="IHVCAKN"/>
<dbReference type="OrthoDB" id="5839at2759"/>
<dbReference type="PhylomeDB" id="Q9CZH3"/>
<dbReference type="TreeFam" id="TF300294"/>
<dbReference type="Reactome" id="R-MMU-9907900">
    <property type="pathway name" value="Proteasome assembly"/>
</dbReference>
<dbReference type="BioGRID-ORCS" id="66506">
    <property type="hits" value="25 hits in 80 CRISPR screens"/>
</dbReference>
<dbReference type="PRO" id="PR:Q9CZH3"/>
<dbReference type="Proteomes" id="UP000000589">
    <property type="component" value="Chromosome 5"/>
</dbReference>
<dbReference type="RNAct" id="Q9CZH3">
    <property type="molecule type" value="protein"/>
</dbReference>
<dbReference type="Bgee" id="ENSMUSG00000029551">
    <property type="expression patterns" value="Expressed in blastoderm cell in morula and 224 other cell types or tissues"/>
</dbReference>
<dbReference type="GO" id="GO:0005829">
    <property type="term" value="C:cytosol"/>
    <property type="evidence" value="ECO:0000304"/>
    <property type="project" value="Reactome"/>
</dbReference>
<dbReference type="GO" id="GO:0032991">
    <property type="term" value="C:protein-containing complex"/>
    <property type="evidence" value="ECO:0000314"/>
    <property type="project" value="UniProtKB"/>
</dbReference>
<dbReference type="GO" id="GO:0060090">
    <property type="term" value="F:molecular adaptor activity"/>
    <property type="evidence" value="ECO:0007669"/>
    <property type="project" value="Ensembl"/>
</dbReference>
<dbReference type="GO" id="GO:0044877">
    <property type="term" value="F:protein-containing complex binding"/>
    <property type="evidence" value="ECO:0000314"/>
    <property type="project" value="UniProtKB"/>
</dbReference>
<dbReference type="GO" id="GO:0051131">
    <property type="term" value="P:chaperone-mediated protein complex assembly"/>
    <property type="evidence" value="ECO:0007669"/>
    <property type="project" value="Ensembl"/>
</dbReference>
<dbReference type="GO" id="GO:0043248">
    <property type="term" value="P:proteasome assembly"/>
    <property type="evidence" value="ECO:0007669"/>
    <property type="project" value="InterPro"/>
</dbReference>
<dbReference type="Gene3D" id="3.30.230.90">
    <property type="match status" value="1"/>
</dbReference>
<dbReference type="InterPro" id="IPR018788">
    <property type="entry name" value="Proteasome_assmbl_chp_3"/>
</dbReference>
<dbReference type="InterPro" id="IPR053720">
    <property type="entry name" value="Psm_Assembly_Chaperone"/>
</dbReference>
<dbReference type="PANTHER" id="PTHR31051">
    <property type="entry name" value="PROTEASOME ASSEMBLY CHAPERONE 3"/>
    <property type="match status" value="1"/>
</dbReference>
<dbReference type="PANTHER" id="PTHR31051:SF1">
    <property type="entry name" value="PROTEASOME ASSEMBLY CHAPERONE 3"/>
    <property type="match status" value="1"/>
</dbReference>
<dbReference type="Pfam" id="PF10178">
    <property type="entry name" value="PAC3"/>
    <property type="match status" value="1"/>
</dbReference>
<evidence type="ECO:0000250" key="1"/>
<evidence type="ECO:0000250" key="2">
    <source>
        <dbReference type="UniProtKB" id="Q9BT73"/>
    </source>
</evidence>
<evidence type="ECO:0000269" key="3">
    <source>
    </source>
</evidence>
<evidence type="ECO:0000305" key="4"/>
<protein>
    <recommendedName>
        <fullName>Proteasome assembly chaperone 3</fullName>
        <shortName>PAC-3</shortName>
        <shortName>mPAC3</shortName>
    </recommendedName>
    <alternativeName>
        <fullName>Proteasome chaperone homolog 3</fullName>
        <shortName>Pba3</shortName>
    </alternativeName>
</protein>
<gene>
    <name type="primary">Psmg3</name>
    <name type="synonym">Pac3</name>
</gene>
<feature type="chain" id="PRO_0000271359" description="Proteasome assembly chaperone 3">
    <location>
        <begin position="1"/>
        <end position="122"/>
    </location>
</feature>
<feature type="modified residue" description="N-acetylmethionine" evidence="2">
    <location>
        <position position="1"/>
    </location>
</feature>
<keyword id="KW-0007">Acetylation</keyword>
<keyword id="KW-0143">Chaperone</keyword>
<keyword id="KW-1185">Reference proteome</keyword>
<organism>
    <name type="scientific">Mus musculus</name>
    <name type="common">Mouse</name>
    <dbReference type="NCBI Taxonomy" id="10090"/>
    <lineage>
        <taxon>Eukaryota</taxon>
        <taxon>Metazoa</taxon>
        <taxon>Chordata</taxon>
        <taxon>Craniata</taxon>
        <taxon>Vertebrata</taxon>
        <taxon>Euteleostomi</taxon>
        <taxon>Mammalia</taxon>
        <taxon>Eutheria</taxon>
        <taxon>Euarchontoglires</taxon>
        <taxon>Glires</taxon>
        <taxon>Rodentia</taxon>
        <taxon>Myomorpha</taxon>
        <taxon>Muroidea</taxon>
        <taxon>Muridae</taxon>
        <taxon>Murinae</taxon>
        <taxon>Mus</taxon>
        <taxon>Mus</taxon>
    </lineage>
</organism>